<accession>B5BHN6</accession>
<dbReference type="EMBL" id="FM200053">
    <property type="protein sequence ID" value="CAR61475.1"/>
    <property type="molecule type" value="Genomic_DNA"/>
</dbReference>
<dbReference type="RefSeq" id="WP_000626193.1">
    <property type="nucleotide sequence ID" value="NC_011147.1"/>
</dbReference>
<dbReference type="GeneID" id="66757914"/>
<dbReference type="KEGG" id="sek:SSPA3219"/>
<dbReference type="HOGENOM" id="CLU_151816_0_0_6"/>
<dbReference type="Proteomes" id="UP000001869">
    <property type="component" value="Chromosome"/>
</dbReference>
<dbReference type="GO" id="GO:0005886">
    <property type="term" value="C:plasma membrane"/>
    <property type="evidence" value="ECO:0007669"/>
    <property type="project" value="UniProtKB-SubCell"/>
</dbReference>
<dbReference type="HAMAP" id="MF_01088">
    <property type="entry name" value="UspB"/>
    <property type="match status" value="1"/>
</dbReference>
<dbReference type="InterPro" id="IPR019598">
    <property type="entry name" value="Universal_stress_protein_B"/>
</dbReference>
<dbReference type="NCBIfam" id="NF003435">
    <property type="entry name" value="PRK04960.1"/>
    <property type="match status" value="1"/>
</dbReference>
<dbReference type="Pfam" id="PF10625">
    <property type="entry name" value="UspB"/>
    <property type="match status" value="1"/>
</dbReference>
<sequence>MISTVSLFWALCVVCIVNMARYFSSLRALLVVLRGCDPLLYQYVDGGGFFTTHGQPNKQVRLVWYIYAQRYRDHHDEEFIRRCERVRRQFLLTSALCGLVVVSLIALMIWH</sequence>
<comment type="subcellular location">
    <subcellularLocation>
        <location evidence="1">Cell inner membrane</location>
        <topology evidence="1">Multi-pass membrane protein</topology>
    </subcellularLocation>
</comment>
<comment type="similarity">
    <text evidence="1">Belongs to the universal stress protein B family.</text>
</comment>
<evidence type="ECO:0000255" key="1">
    <source>
        <dbReference type="HAMAP-Rule" id="MF_01088"/>
    </source>
</evidence>
<gene>
    <name evidence="1" type="primary">uspB</name>
    <name type="ordered locus">SSPA3219</name>
</gene>
<name>USPB_SALPK</name>
<organism>
    <name type="scientific">Salmonella paratyphi A (strain AKU_12601)</name>
    <dbReference type="NCBI Taxonomy" id="554290"/>
    <lineage>
        <taxon>Bacteria</taxon>
        <taxon>Pseudomonadati</taxon>
        <taxon>Pseudomonadota</taxon>
        <taxon>Gammaproteobacteria</taxon>
        <taxon>Enterobacterales</taxon>
        <taxon>Enterobacteriaceae</taxon>
        <taxon>Salmonella</taxon>
    </lineage>
</organism>
<keyword id="KW-0997">Cell inner membrane</keyword>
<keyword id="KW-1003">Cell membrane</keyword>
<keyword id="KW-0472">Membrane</keyword>
<keyword id="KW-0812">Transmembrane</keyword>
<keyword id="KW-1133">Transmembrane helix</keyword>
<reference key="1">
    <citation type="journal article" date="2009" name="BMC Genomics">
        <title>Pseudogene accumulation in the evolutionary histories of Salmonella enterica serovars Paratyphi A and Typhi.</title>
        <authorList>
            <person name="Holt K.E."/>
            <person name="Thomson N.R."/>
            <person name="Wain J."/>
            <person name="Langridge G.C."/>
            <person name="Hasan R."/>
            <person name="Bhutta Z.A."/>
            <person name="Quail M.A."/>
            <person name="Norbertczak H."/>
            <person name="Walker D."/>
            <person name="Simmonds M."/>
            <person name="White B."/>
            <person name="Bason N."/>
            <person name="Mungall K."/>
            <person name="Dougan G."/>
            <person name="Parkhill J."/>
        </authorList>
    </citation>
    <scope>NUCLEOTIDE SEQUENCE [LARGE SCALE GENOMIC DNA]</scope>
    <source>
        <strain>AKU_12601</strain>
    </source>
</reference>
<proteinExistence type="inferred from homology"/>
<protein>
    <recommendedName>
        <fullName evidence="1">Universal stress protein B</fullName>
    </recommendedName>
</protein>
<feature type="chain" id="PRO_1000136922" description="Universal stress protein B">
    <location>
        <begin position="1"/>
        <end position="111"/>
    </location>
</feature>
<feature type="transmembrane region" description="Helical" evidence="1">
    <location>
        <begin position="1"/>
        <end position="21"/>
    </location>
</feature>
<feature type="transmembrane region" description="Helical" evidence="1">
    <location>
        <begin position="90"/>
        <end position="110"/>
    </location>
</feature>